<reference key="1">
    <citation type="journal article" date="2007" name="PLoS Genet.">
        <title>Patterns and implications of gene gain and loss in the evolution of Prochlorococcus.</title>
        <authorList>
            <person name="Kettler G.C."/>
            <person name="Martiny A.C."/>
            <person name="Huang K."/>
            <person name="Zucker J."/>
            <person name="Coleman M.L."/>
            <person name="Rodrigue S."/>
            <person name="Chen F."/>
            <person name="Lapidus A."/>
            <person name="Ferriera S."/>
            <person name="Johnson J."/>
            <person name="Steglich C."/>
            <person name="Church G.M."/>
            <person name="Richardson P."/>
            <person name="Chisholm S.W."/>
        </authorList>
    </citation>
    <scope>NUCLEOTIDE SEQUENCE [LARGE SCALE GENOMIC DNA]</scope>
    <source>
        <strain>MIT 9303</strain>
    </source>
</reference>
<protein>
    <recommendedName>
        <fullName evidence="1">Photosystem I P700 chlorophyll a apoprotein A1</fullName>
        <ecNumber evidence="1">1.97.1.12</ecNumber>
    </recommendedName>
    <alternativeName>
        <fullName evidence="1">PsaA</fullName>
    </alternativeName>
</protein>
<keyword id="KW-0004">4Fe-4S</keyword>
<keyword id="KW-0148">Chlorophyll</keyword>
<keyword id="KW-0157">Chromophore</keyword>
<keyword id="KW-0249">Electron transport</keyword>
<keyword id="KW-0408">Iron</keyword>
<keyword id="KW-0411">Iron-sulfur</keyword>
<keyword id="KW-0460">Magnesium</keyword>
<keyword id="KW-0472">Membrane</keyword>
<keyword id="KW-0479">Metal-binding</keyword>
<keyword id="KW-0560">Oxidoreductase</keyword>
<keyword id="KW-0602">Photosynthesis</keyword>
<keyword id="KW-0603">Photosystem I</keyword>
<keyword id="KW-0793">Thylakoid</keyword>
<keyword id="KW-0812">Transmembrane</keyword>
<keyword id="KW-1133">Transmembrane helix</keyword>
<keyword id="KW-0813">Transport</keyword>
<comment type="function">
    <text evidence="1">PsaA and PsaB bind P700, the primary electron donor of photosystem I (PSI), as well as the electron acceptors A0, A1 and FX. PSI is a plastocyanin/cytochrome c6-ferredoxin oxidoreductase, converting photonic excitation into a charge separation, which transfers an electron from the donor P700 chlorophyll pair to the spectroscopically characterized acceptors A0, A1, FX, FA and FB in turn. Oxidized P700 is reduced on the lumenal side of the thylakoid membrane by plastocyanin or cytochrome c6.</text>
</comment>
<comment type="catalytic activity">
    <reaction evidence="1">
        <text>reduced [plastocyanin] + hnu + oxidized [2Fe-2S]-[ferredoxin] = oxidized [plastocyanin] + reduced [2Fe-2S]-[ferredoxin]</text>
        <dbReference type="Rhea" id="RHEA:30407"/>
        <dbReference type="Rhea" id="RHEA-COMP:10000"/>
        <dbReference type="Rhea" id="RHEA-COMP:10001"/>
        <dbReference type="Rhea" id="RHEA-COMP:10039"/>
        <dbReference type="Rhea" id="RHEA-COMP:10040"/>
        <dbReference type="ChEBI" id="CHEBI:29036"/>
        <dbReference type="ChEBI" id="CHEBI:30212"/>
        <dbReference type="ChEBI" id="CHEBI:33737"/>
        <dbReference type="ChEBI" id="CHEBI:33738"/>
        <dbReference type="ChEBI" id="CHEBI:49552"/>
        <dbReference type="EC" id="1.97.1.12"/>
    </reaction>
</comment>
<comment type="cofactor">
    <text evidence="1">PSI electron transfer chain: 5 divinyl chlorophyll a, 1 divinyl chlorophyll a', 2 phylloquinones and 3 4Fe-4S clusters. PSI core antenna: 90 divinyl chlorophyll a, 22 carotenoids, 3 phospholipids and 1 galactolipid. P700 is a divinyl chlorophyll a/divinyl chlorophyll a' dimer, A0 is one or more divinyl chlorophyll a, A1 is one or both phylloquinones and FX is a shared 4Fe-4S iron-sulfur center.</text>
</comment>
<comment type="subunit">
    <text evidence="1">The PsaA/B heterodimer binds the P700 divinyl chlorophyll special pair and subsequent electron acceptors. PSI consists of a core antenna complex that captures photons, and an electron transfer chain that converts photonic excitation into a charge separation. The cyanobacterial PSI reaction center is composed of one copy each of PsaA,B,C,D,E,F,I,J,K,L,M and X, and forms trimeric complexes.</text>
</comment>
<comment type="subcellular location">
    <subcellularLocation>
        <location evidence="1">Cellular thylakoid membrane</location>
        <topology evidence="1">Multi-pass membrane protein</topology>
    </subcellularLocation>
</comment>
<comment type="similarity">
    <text evidence="1">Belongs to the PsaA/PsaB family.</text>
</comment>
<name>PSAA_PROM3</name>
<gene>
    <name evidence="1" type="primary">psaA</name>
    <name type="ordered locus">P9303_23481</name>
</gene>
<dbReference type="EC" id="1.97.1.12" evidence="1"/>
<dbReference type="EMBL" id="CP000554">
    <property type="protein sequence ID" value="ABM79083.1"/>
    <property type="molecule type" value="Genomic_DNA"/>
</dbReference>
<dbReference type="RefSeq" id="WP_011826946.1">
    <property type="nucleotide sequence ID" value="NC_008820.1"/>
</dbReference>
<dbReference type="SMR" id="A2CC73"/>
<dbReference type="STRING" id="59922.P9303_23481"/>
<dbReference type="KEGG" id="pmf:P9303_23481"/>
<dbReference type="HOGENOM" id="CLU_016126_1_0_3"/>
<dbReference type="BioCyc" id="PMAR59922:G1G80-2065-MONOMER"/>
<dbReference type="Proteomes" id="UP000002274">
    <property type="component" value="Chromosome"/>
</dbReference>
<dbReference type="GO" id="GO:0009522">
    <property type="term" value="C:photosystem I"/>
    <property type="evidence" value="ECO:0007669"/>
    <property type="project" value="UniProtKB-KW"/>
</dbReference>
<dbReference type="GO" id="GO:0031676">
    <property type="term" value="C:plasma membrane-derived thylakoid membrane"/>
    <property type="evidence" value="ECO:0007669"/>
    <property type="project" value="UniProtKB-SubCell"/>
</dbReference>
<dbReference type="GO" id="GO:0051539">
    <property type="term" value="F:4 iron, 4 sulfur cluster binding"/>
    <property type="evidence" value="ECO:0007669"/>
    <property type="project" value="UniProtKB-KW"/>
</dbReference>
<dbReference type="GO" id="GO:0016168">
    <property type="term" value="F:chlorophyll binding"/>
    <property type="evidence" value="ECO:0007669"/>
    <property type="project" value="UniProtKB-KW"/>
</dbReference>
<dbReference type="GO" id="GO:0009055">
    <property type="term" value="F:electron transfer activity"/>
    <property type="evidence" value="ECO:0007669"/>
    <property type="project" value="UniProtKB-UniRule"/>
</dbReference>
<dbReference type="GO" id="GO:0000287">
    <property type="term" value="F:magnesium ion binding"/>
    <property type="evidence" value="ECO:0007669"/>
    <property type="project" value="UniProtKB-UniRule"/>
</dbReference>
<dbReference type="GO" id="GO:0016491">
    <property type="term" value="F:oxidoreductase activity"/>
    <property type="evidence" value="ECO:0007669"/>
    <property type="project" value="UniProtKB-KW"/>
</dbReference>
<dbReference type="GO" id="GO:0015979">
    <property type="term" value="P:photosynthesis"/>
    <property type="evidence" value="ECO:0007669"/>
    <property type="project" value="UniProtKB-UniRule"/>
</dbReference>
<dbReference type="Gene3D" id="1.20.1130.10">
    <property type="entry name" value="Photosystem I PsaA/PsaB"/>
    <property type="match status" value="1"/>
</dbReference>
<dbReference type="HAMAP" id="MF_00458">
    <property type="entry name" value="PSI_PsaA"/>
    <property type="match status" value="1"/>
</dbReference>
<dbReference type="InterPro" id="IPR006243">
    <property type="entry name" value="PSI_PsaA"/>
</dbReference>
<dbReference type="InterPro" id="IPR001280">
    <property type="entry name" value="PSI_PsaA/B"/>
</dbReference>
<dbReference type="InterPro" id="IPR020586">
    <property type="entry name" value="PSI_PsaA/B_CS"/>
</dbReference>
<dbReference type="InterPro" id="IPR036408">
    <property type="entry name" value="PSI_PsaA/B_sf"/>
</dbReference>
<dbReference type="NCBIfam" id="TIGR01335">
    <property type="entry name" value="psaA"/>
    <property type="match status" value="1"/>
</dbReference>
<dbReference type="PANTHER" id="PTHR30128">
    <property type="entry name" value="OUTER MEMBRANE PROTEIN, OMPA-RELATED"/>
    <property type="match status" value="1"/>
</dbReference>
<dbReference type="PANTHER" id="PTHR30128:SF19">
    <property type="entry name" value="PHOTOSYSTEM I P700 CHLOROPHYLL A APOPROTEIN A1-RELATED"/>
    <property type="match status" value="1"/>
</dbReference>
<dbReference type="Pfam" id="PF00223">
    <property type="entry name" value="PsaA_PsaB"/>
    <property type="match status" value="1"/>
</dbReference>
<dbReference type="PIRSF" id="PIRSF002905">
    <property type="entry name" value="PSI_A"/>
    <property type="match status" value="1"/>
</dbReference>
<dbReference type="PRINTS" id="PR00257">
    <property type="entry name" value="PHOTSYSPSAAB"/>
</dbReference>
<dbReference type="SUPFAM" id="SSF81558">
    <property type="entry name" value="Photosystem I subunits PsaA/PsaB"/>
    <property type="match status" value="1"/>
</dbReference>
<dbReference type="PROSITE" id="PS00419">
    <property type="entry name" value="PHOTOSYSTEM_I_PSAAB"/>
    <property type="match status" value="1"/>
</dbReference>
<organism>
    <name type="scientific">Prochlorococcus marinus (strain MIT 9303)</name>
    <dbReference type="NCBI Taxonomy" id="59922"/>
    <lineage>
        <taxon>Bacteria</taxon>
        <taxon>Bacillati</taxon>
        <taxon>Cyanobacteriota</taxon>
        <taxon>Cyanophyceae</taxon>
        <taxon>Synechococcales</taxon>
        <taxon>Prochlorococcaceae</taxon>
        <taxon>Prochlorococcus</taxon>
    </lineage>
</organism>
<proteinExistence type="inferred from homology"/>
<feature type="chain" id="PRO_0000294201" description="Photosystem I P700 chlorophyll a apoprotein A1">
    <location>
        <begin position="1"/>
        <end position="776"/>
    </location>
</feature>
<feature type="transmembrane region" description="Helical; Name=I" evidence="1">
    <location>
        <begin position="76"/>
        <end position="99"/>
    </location>
</feature>
<feature type="transmembrane region" description="Helical; Name=II" evidence="1">
    <location>
        <begin position="162"/>
        <end position="185"/>
    </location>
</feature>
<feature type="transmembrane region" description="Helical; Name=III" evidence="1">
    <location>
        <begin position="201"/>
        <end position="225"/>
    </location>
</feature>
<feature type="transmembrane region" description="Helical; Name=IV" evidence="1">
    <location>
        <begin position="309"/>
        <end position="327"/>
    </location>
</feature>
<feature type="transmembrane region" description="Helical; Name=V" evidence="1">
    <location>
        <begin position="368"/>
        <end position="391"/>
    </location>
</feature>
<feature type="transmembrane region" description="Helical; Name=VI" evidence="1">
    <location>
        <begin position="407"/>
        <end position="433"/>
    </location>
</feature>
<feature type="transmembrane region" description="Helical; Name=VII" evidence="1">
    <location>
        <begin position="455"/>
        <end position="477"/>
    </location>
</feature>
<feature type="transmembrane region" description="Helical; Name=VIII" evidence="1">
    <location>
        <begin position="557"/>
        <end position="575"/>
    </location>
</feature>
<feature type="transmembrane region" description="Helical; Name=IX" evidence="1">
    <location>
        <begin position="615"/>
        <end position="636"/>
    </location>
</feature>
<feature type="transmembrane region" description="Helical; Name=X" evidence="1">
    <location>
        <begin position="690"/>
        <end position="712"/>
    </location>
</feature>
<feature type="transmembrane region" description="Helical; Name=XI" evidence="1">
    <location>
        <begin position="750"/>
        <end position="770"/>
    </location>
</feature>
<feature type="binding site" evidence="1">
    <location>
        <position position="599"/>
    </location>
    <ligand>
        <name>[4Fe-4S] cluster</name>
        <dbReference type="ChEBI" id="CHEBI:49883"/>
        <note>ligand shared between dimeric partners</note>
    </ligand>
</feature>
<feature type="binding site" evidence="1">
    <location>
        <position position="608"/>
    </location>
    <ligand>
        <name>[4Fe-4S] cluster</name>
        <dbReference type="ChEBI" id="CHEBI:49883"/>
        <note>ligand shared between dimeric partners</note>
    </ligand>
</feature>
<feature type="binding site" description="axial binding residue" evidence="1">
    <location>
        <position position="701"/>
    </location>
    <ligand>
        <name>divinylchlorophyll a'</name>
        <dbReference type="ChEBI" id="CHEBI:189420"/>
        <label>A1</label>
    </ligand>
    <ligandPart>
        <name>Mg</name>
        <dbReference type="ChEBI" id="CHEBI:25107"/>
    </ligandPart>
</feature>
<feature type="binding site" description="axial binding residue" evidence="1">
    <location>
        <position position="709"/>
    </location>
    <ligand>
        <name>divinyl chlorophyll a</name>
        <dbReference type="ChEBI" id="CHEBI:73095"/>
        <label>A3</label>
    </ligand>
    <ligandPart>
        <name>Mg</name>
        <dbReference type="ChEBI" id="CHEBI:25107"/>
    </ligandPart>
</feature>
<feature type="binding site" evidence="1">
    <location>
        <position position="717"/>
    </location>
    <ligand>
        <name>divinyl chlorophyll a</name>
        <dbReference type="ChEBI" id="CHEBI:73095"/>
        <label>A3</label>
    </ligand>
</feature>
<feature type="binding site" evidence="1">
    <location>
        <position position="718"/>
    </location>
    <ligand>
        <name>phylloquinone</name>
        <dbReference type="ChEBI" id="CHEBI:18067"/>
        <label>A</label>
    </ligand>
</feature>
<accession>A2CC73</accession>
<sequence>MTISPPERGEKAKPIYDQPVDRDHVPADFEKFEQPGFFSKSLAKGPNSTTWIWNLHADAHDFDTHIGDLEETSRKIFSAHFGHLAIVFIWLSGAFFHGARFSNYSGWLADPTHVKASAQVVWPIVGQEIMNADVGAGFNGIQITSGIFQMWRAWGITSETELMALATGALIMAGLVLHGGIFHYHKAAPKLEWFKKIESMLQHHQIGLFGLGSLGWTGHLIHVANPTNALLDAIDAGTPMVLDGKTIATAADIPLPHELYNADLVGQIYPGLASGIGNFFSANWWAFSDFLTNNGGVNPVTGALWSTDVAHHHLAWAVFLMFGGHVYRSRFGIGHSMKEIMGNVKGDPLLFPAPNGHKGLFEFLSNSWHAQLAVNLACIGSGSIVVAHHMYSLPPYPYLATDYPTVLGLFTHHMWIGGLMICGAAAHAGIAVIRDYDVSVHVDNVLDRMFKARDAIISHLNWVCMFLGFHSFGLYIHNDSMRALGRSQDMFSDSAIQLQPVLAQWIQSLWASSIGTSSVVGTTTGLPGAVSDVFNGGVVAVGGKVALMAIPLGTADLMIHHIHAFTIHVTCLILLKGVLFARSSRLVPDKANLGFRFSCDGPGRGGTCQVSSWDHVFLGLFWMYNSLSMVIFYFSWKMQSDVWGTVNSDGSVTHLVSGNFAQSAITVNGWFRDFLWAQSSQVLTSYGTGLSGYGLLFLGGHFVWAFSLMFLFSGRGYWQELFESIIWAHNKLKLAPTIQPRALSITQGRAVGVTHFLFGGIVTTWAFFHARLLGLG</sequence>
<evidence type="ECO:0000255" key="1">
    <source>
        <dbReference type="HAMAP-Rule" id="MF_00458"/>
    </source>
</evidence>